<keyword id="KW-0025">Alternative splicing</keyword>
<keyword id="KW-1267">Proteomics identification</keyword>
<keyword id="KW-1185">Reference proteome</keyword>
<protein>
    <recommendedName>
        <fullName>Ubiquilin-like protein</fullName>
    </recommendedName>
</protein>
<feature type="chain" id="PRO_0000307791" description="Ubiquilin-like protein">
    <location>
        <begin position="1"/>
        <end position="475"/>
    </location>
</feature>
<feature type="domain" description="Ubiquitin-like" evidence="1">
    <location>
        <begin position="31"/>
        <end position="105"/>
    </location>
</feature>
<feature type="region of interest" description="Disordered" evidence="2">
    <location>
        <begin position="113"/>
        <end position="138"/>
    </location>
</feature>
<feature type="region of interest" description="Disordered" evidence="2">
    <location>
        <begin position="305"/>
        <end position="325"/>
    </location>
</feature>
<feature type="compositionally biased region" description="Polar residues" evidence="2">
    <location>
        <begin position="129"/>
        <end position="138"/>
    </location>
</feature>
<feature type="splice variant" id="VSP_028833" description="In isoform 2." evidence="5">
    <location>
        <begin position="127"/>
        <end position="341"/>
    </location>
</feature>
<feature type="sequence variant" id="VAR_036652" description="In dbSNP:rs7933557.">
    <original>D</original>
    <variation>V</variation>
    <location>
        <position position="92"/>
    </location>
</feature>
<feature type="sequence variant" id="VAR_036653" description="In dbSNP:rs3802978.">
    <original>Q</original>
    <variation>K</variation>
    <location>
        <position position="143"/>
    </location>
</feature>
<feature type="sequence variant" id="VAR_036654" description="In dbSNP:rs2047456." evidence="4">
    <original>C</original>
    <variation>R</variation>
    <location>
        <position position="171"/>
    </location>
</feature>
<feature type="sequence variant" id="VAR_036655" description="In dbSNP:rs16932225.">
    <original>G</original>
    <variation>D</variation>
    <location>
        <position position="259"/>
    </location>
</feature>
<feature type="sequence variant" id="VAR_036656" description="In dbSNP:rs2017434." evidence="4">
    <original>Y</original>
    <variation>H</variation>
    <location>
        <position position="274"/>
    </location>
</feature>
<feature type="sequence variant" id="VAR_036657" description="In dbSNP:rs2017433." evidence="3 4">
    <original>A</original>
    <variation>V</variation>
    <location>
        <position position="275"/>
    </location>
</feature>
<feature type="sequence variant" id="VAR_036658" description="In dbSNP:rs393044." evidence="3 4">
    <original>W</original>
    <variation>G</variation>
    <location>
        <position position="379"/>
    </location>
</feature>
<feature type="sequence variant" id="VAR_036659" description="In dbSNP:rs12223282." evidence="4">
    <original>Q</original>
    <variation>E</variation>
    <location>
        <position position="455"/>
    </location>
</feature>
<feature type="sequence conflict" description="In Ref. 1; BAB71398." evidence="6" ref="1">
    <original>K</original>
    <variation>E</variation>
    <location>
        <position position="351"/>
    </location>
</feature>
<feature type="sequence conflict" description="In Ref. 1; BAB71398." evidence="6" ref="1">
    <original>D</original>
    <variation>G</variation>
    <location>
        <position position="398"/>
    </location>
</feature>
<name>UBQLN_HUMAN</name>
<comment type="interaction">
    <interactant intactId="EBI-12295223">
        <id>Q8IYU4</id>
    </interactant>
    <interactant intactId="EBI-750475">
        <id>P45381</id>
        <label>ASPA</label>
    </interactant>
    <organismsDiffer>false</organismsDiffer>
    <experiments>3</experiments>
</comment>
<comment type="interaction">
    <interactant intactId="EBI-12295223">
        <id>Q8IYU4</id>
    </interactant>
    <interactant intactId="EBI-702390">
        <id>Q9UBB4</id>
        <label>ATXN10</label>
    </interactant>
    <organismsDiffer>false</organismsDiffer>
    <experiments>3</experiments>
</comment>
<comment type="interaction">
    <interactant intactId="EBI-12295223">
        <id>Q8IYU4</id>
    </interactant>
    <interactant intactId="EBI-2806959">
        <id>Q6ICB0</id>
        <label>DESI1</label>
    </interactant>
    <organismsDiffer>false</organismsDiffer>
    <experiments>6</experiments>
</comment>
<comment type="interaction">
    <interactant intactId="EBI-12295223">
        <id>Q8IYU4</id>
    </interactant>
    <interactant intactId="EBI-7133736">
        <id>P07686</id>
        <label>HEXB</label>
    </interactant>
    <organismsDiffer>false</organismsDiffer>
    <experiments>3</experiments>
</comment>
<comment type="interaction">
    <interactant intactId="EBI-12295223">
        <id>Q8IYU4</id>
    </interactant>
    <interactant intactId="EBI-740220">
        <id>O14964</id>
        <label>HGS</label>
    </interactant>
    <organismsDiffer>false</organismsDiffer>
    <experiments>3</experiments>
</comment>
<comment type="interaction">
    <interactant intactId="EBI-12295223">
        <id>Q8IYU4</id>
    </interactant>
    <interactant intactId="EBI-1055254">
        <id>Q8WXH2</id>
        <label>JPH3</label>
    </interactant>
    <organismsDiffer>false</organismsDiffer>
    <experiments>3</experiments>
</comment>
<comment type="interaction">
    <interactant intactId="EBI-12295223">
        <id>Q8IYU4</id>
    </interactant>
    <interactant intactId="EBI-948266">
        <id>O14901</id>
        <label>KLF11</label>
    </interactant>
    <organismsDiffer>false</organismsDiffer>
    <experiments>3</experiments>
</comment>
<comment type="interaction">
    <interactant intactId="EBI-12295223">
        <id>Q8IYU4</id>
    </interactant>
    <interactant intactId="EBI-372899">
        <id>Q13148</id>
        <label>TARDBP</label>
    </interactant>
    <organismsDiffer>false</organismsDiffer>
    <experiments>3</experiments>
</comment>
<comment type="alternative products">
    <event type="alternative splicing"/>
    <isoform>
        <id>Q8IYU4-1</id>
        <name>1</name>
        <sequence type="displayed"/>
    </isoform>
    <isoform>
        <id>Q8IYU4-2</id>
        <name>2</name>
        <sequence type="described" ref="VSP_028833"/>
    </isoform>
</comment>
<comment type="sequence caution" evidence="6">
    <conflict type="miscellaneous discrepancy">
        <sequence resource="EMBL-CDS" id="BAC87218"/>
    </conflict>
    <text>Chimeric cDNA.</text>
</comment>
<proteinExistence type="evidence at protein level"/>
<evidence type="ECO:0000255" key="1">
    <source>
        <dbReference type="PROSITE-ProRule" id="PRU00214"/>
    </source>
</evidence>
<evidence type="ECO:0000256" key="2">
    <source>
        <dbReference type="SAM" id="MobiDB-lite"/>
    </source>
</evidence>
<evidence type="ECO:0000269" key="3">
    <source>
    </source>
</evidence>
<evidence type="ECO:0000269" key="4">
    <source>
    </source>
</evidence>
<evidence type="ECO:0000303" key="5">
    <source>
    </source>
</evidence>
<evidence type="ECO:0000305" key="6"/>
<gene>
    <name type="primary">UBQLNL</name>
</gene>
<dbReference type="EMBL" id="AK057255">
    <property type="protein sequence ID" value="BAB71398.1"/>
    <property type="molecule type" value="mRNA"/>
</dbReference>
<dbReference type="EMBL" id="AK127987">
    <property type="protein sequence ID" value="BAC87218.1"/>
    <property type="status" value="ALT_SEQ"/>
    <property type="molecule type" value="mRNA"/>
</dbReference>
<dbReference type="EMBL" id="AC087380">
    <property type="status" value="NOT_ANNOTATED_CDS"/>
    <property type="molecule type" value="Genomic_DNA"/>
</dbReference>
<dbReference type="EMBL" id="BC012183">
    <property type="protein sequence ID" value="AAH12183.2"/>
    <property type="molecule type" value="mRNA"/>
</dbReference>
<dbReference type="EMBL" id="BC034977">
    <property type="protein sequence ID" value="AAH34977.2"/>
    <property type="molecule type" value="mRNA"/>
</dbReference>
<dbReference type="CCDS" id="CCDS31385.1">
    <molecule id="Q8IYU4-1"/>
</dbReference>
<dbReference type="RefSeq" id="NP_659490.4">
    <molecule id="Q8IYU4-1"/>
    <property type="nucleotide sequence ID" value="NM_145053.4"/>
</dbReference>
<dbReference type="SMR" id="Q8IYU4"/>
<dbReference type="BioGRID" id="126812">
    <property type="interactions" value="5"/>
</dbReference>
<dbReference type="FunCoup" id="Q8IYU4">
    <property type="interactions" value="10"/>
</dbReference>
<dbReference type="IntAct" id="Q8IYU4">
    <property type="interactions" value="8"/>
</dbReference>
<dbReference type="STRING" id="9606.ENSP00000369531"/>
<dbReference type="iPTMnet" id="Q8IYU4"/>
<dbReference type="PhosphoSitePlus" id="Q8IYU4"/>
<dbReference type="BioMuta" id="UBQLNL"/>
<dbReference type="DMDM" id="296453003"/>
<dbReference type="jPOST" id="Q8IYU4"/>
<dbReference type="MassIVE" id="Q8IYU4"/>
<dbReference type="PaxDb" id="9606-ENSP00000369531"/>
<dbReference type="PeptideAtlas" id="Q8IYU4"/>
<dbReference type="ProteomicsDB" id="71242">
    <molecule id="Q8IYU4-1"/>
</dbReference>
<dbReference type="Antibodypedia" id="23640">
    <property type="antibodies" value="70 antibodies from 20 providers"/>
</dbReference>
<dbReference type="DNASU" id="143630"/>
<dbReference type="Ensembl" id="ENST00000380184.2">
    <molecule id="Q8IYU4-1"/>
    <property type="protein sequence ID" value="ENSP00000369531.1"/>
    <property type="gene ID" value="ENSG00000175518.8"/>
</dbReference>
<dbReference type="GeneID" id="143630"/>
<dbReference type="KEGG" id="hsa:143630"/>
<dbReference type="MANE-Select" id="ENST00000380184.2">
    <property type="protein sequence ID" value="ENSP00000369531.1"/>
    <property type="RefSeq nucleotide sequence ID" value="NM_145053.5"/>
    <property type="RefSeq protein sequence ID" value="NP_659490.4"/>
</dbReference>
<dbReference type="UCSC" id="uc001maz.5">
    <molecule id="Q8IYU4-1"/>
    <property type="organism name" value="human"/>
</dbReference>
<dbReference type="AGR" id="HGNC:28294"/>
<dbReference type="CTD" id="143630"/>
<dbReference type="DisGeNET" id="143630"/>
<dbReference type="GeneCards" id="UBQLNL"/>
<dbReference type="HGNC" id="HGNC:28294">
    <property type="gene designation" value="UBQLNL"/>
</dbReference>
<dbReference type="HPA" id="ENSG00000175518">
    <property type="expression patterns" value="Tissue enriched (testis)"/>
</dbReference>
<dbReference type="neXtProt" id="NX_Q8IYU4"/>
<dbReference type="OpenTargets" id="ENSG00000175518"/>
<dbReference type="PharmGKB" id="PA162407912"/>
<dbReference type="VEuPathDB" id="HostDB:ENSG00000175518"/>
<dbReference type="eggNOG" id="KOG0010">
    <property type="taxonomic scope" value="Eukaryota"/>
</dbReference>
<dbReference type="GeneTree" id="ENSGT00940000163345"/>
<dbReference type="HOGENOM" id="CLU_024293_4_0_1"/>
<dbReference type="InParanoid" id="Q8IYU4"/>
<dbReference type="OMA" id="LSAHFKC"/>
<dbReference type="OrthoDB" id="267397at2759"/>
<dbReference type="PAN-GO" id="Q8IYU4">
    <property type="GO annotations" value="3 GO annotations based on evolutionary models"/>
</dbReference>
<dbReference type="PhylomeDB" id="Q8IYU4"/>
<dbReference type="TreeFam" id="TF314412"/>
<dbReference type="PathwayCommons" id="Q8IYU4"/>
<dbReference type="SignaLink" id="Q8IYU4"/>
<dbReference type="BioGRID-ORCS" id="143630">
    <property type="hits" value="13 hits in 1152 CRISPR screens"/>
</dbReference>
<dbReference type="ChiTaRS" id="UBQLNL">
    <property type="organism name" value="human"/>
</dbReference>
<dbReference type="GenomeRNAi" id="143630"/>
<dbReference type="Pharos" id="Q8IYU4">
    <property type="development level" value="Tdark"/>
</dbReference>
<dbReference type="PRO" id="PR:Q8IYU4"/>
<dbReference type="Proteomes" id="UP000005640">
    <property type="component" value="Chromosome 11"/>
</dbReference>
<dbReference type="RNAct" id="Q8IYU4">
    <property type="molecule type" value="protein"/>
</dbReference>
<dbReference type="Bgee" id="ENSG00000175518">
    <property type="expression patterns" value="Expressed in sperm and 99 other cell types or tissues"/>
</dbReference>
<dbReference type="ExpressionAtlas" id="Q8IYU4">
    <property type="expression patterns" value="baseline and differential"/>
</dbReference>
<dbReference type="GO" id="GO:0005829">
    <property type="term" value="C:cytosol"/>
    <property type="evidence" value="ECO:0000318"/>
    <property type="project" value="GO_Central"/>
</dbReference>
<dbReference type="GO" id="GO:0031593">
    <property type="term" value="F:polyubiquitin modification-dependent protein binding"/>
    <property type="evidence" value="ECO:0000318"/>
    <property type="project" value="GO_Central"/>
</dbReference>
<dbReference type="GO" id="GO:0006511">
    <property type="term" value="P:ubiquitin-dependent protein catabolic process"/>
    <property type="evidence" value="ECO:0000318"/>
    <property type="project" value="GO_Central"/>
</dbReference>
<dbReference type="CDD" id="cd01808">
    <property type="entry name" value="Ubl_PLICs"/>
    <property type="match status" value="1"/>
</dbReference>
<dbReference type="FunFam" id="3.10.20.90:FF:000095">
    <property type="entry name" value="Ubiquilin 4"/>
    <property type="match status" value="1"/>
</dbReference>
<dbReference type="Gene3D" id="3.10.20.90">
    <property type="entry name" value="Phosphatidylinositol 3-kinase Catalytic Subunit, Chain A, domain 1"/>
    <property type="match status" value="1"/>
</dbReference>
<dbReference type="InterPro" id="IPR015496">
    <property type="entry name" value="Ubiquilin"/>
</dbReference>
<dbReference type="InterPro" id="IPR000626">
    <property type="entry name" value="Ubiquitin-like_dom"/>
</dbReference>
<dbReference type="InterPro" id="IPR029071">
    <property type="entry name" value="Ubiquitin-like_domsf"/>
</dbReference>
<dbReference type="PANTHER" id="PTHR10677">
    <property type="entry name" value="UBIQUILIN"/>
    <property type="match status" value="1"/>
</dbReference>
<dbReference type="PANTHER" id="PTHR10677:SF9">
    <property type="entry name" value="UBIQUILIN-LIKE PROTEIN"/>
    <property type="match status" value="1"/>
</dbReference>
<dbReference type="Pfam" id="PF00240">
    <property type="entry name" value="ubiquitin"/>
    <property type="match status" value="1"/>
</dbReference>
<dbReference type="Pfam" id="PF23195">
    <property type="entry name" value="UBQLN1"/>
    <property type="match status" value="1"/>
</dbReference>
<dbReference type="SMART" id="SM00213">
    <property type="entry name" value="UBQ"/>
    <property type="match status" value="1"/>
</dbReference>
<dbReference type="SUPFAM" id="SSF54236">
    <property type="entry name" value="Ubiquitin-like"/>
    <property type="match status" value="1"/>
</dbReference>
<dbReference type="PROSITE" id="PS50053">
    <property type="entry name" value="UBIQUITIN_2"/>
    <property type="match status" value="1"/>
</dbReference>
<reference key="1">
    <citation type="journal article" date="2004" name="Nat. Genet.">
        <title>Complete sequencing and characterization of 21,243 full-length human cDNAs.</title>
        <authorList>
            <person name="Ota T."/>
            <person name="Suzuki Y."/>
            <person name="Nishikawa T."/>
            <person name="Otsuki T."/>
            <person name="Sugiyama T."/>
            <person name="Irie R."/>
            <person name="Wakamatsu A."/>
            <person name="Hayashi K."/>
            <person name="Sato H."/>
            <person name="Nagai K."/>
            <person name="Kimura K."/>
            <person name="Makita H."/>
            <person name="Sekine M."/>
            <person name="Obayashi M."/>
            <person name="Nishi T."/>
            <person name="Shibahara T."/>
            <person name="Tanaka T."/>
            <person name="Ishii S."/>
            <person name="Yamamoto J."/>
            <person name="Saito K."/>
            <person name="Kawai Y."/>
            <person name="Isono Y."/>
            <person name="Nakamura Y."/>
            <person name="Nagahari K."/>
            <person name="Murakami K."/>
            <person name="Yasuda T."/>
            <person name="Iwayanagi T."/>
            <person name="Wagatsuma M."/>
            <person name="Shiratori A."/>
            <person name="Sudo H."/>
            <person name="Hosoiri T."/>
            <person name="Kaku Y."/>
            <person name="Kodaira H."/>
            <person name="Kondo H."/>
            <person name="Sugawara M."/>
            <person name="Takahashi M."/>
            <person name="Kanda K."/>
            <person name="Yokoi T."/>
            <person name="Furuya T."/>
            <person name="Kikkawa E."/>
            <person name="Omura Y."/>
            <person name="Abe K."/>
            <person name="Kamihara K."/>
            <person name="Katsuta N."/>
            <person name="Sato K."/>
            <person name="Tanikawa M."/>
            <person name="Yamazaki M."/>
            <person name="Ninomiya K."/>
            <person name="Ishibashi T."/>
            <person name="Yamashita H."/>
            <person name="Murakawa K."/>
            <person name="Fujimori K."/>
            <person name="Tanai H."/>
            <person name="Kimata M."/>
            <person name="Watanabe M."/>
            <person name="Hiraoka S."/>
            <person name="Chiba Y."/>
            <person name="Ishida S."/>
            <person name="Ono Y."/>
            <person name="Takiguchi S."/>
            <person name="Watanabe S."/>
            <person name="Yosida M."/>
            <person name="Hotuta T."/>
            <person name="Kusano J."/>
            <person name="Kanehori K."/>
            <person name="Takahashi-Fujii A."/>
            <person name="Hara H."/>
            <person name="Tanase T.-O."/>
            <person name="Nomura Y."/>
            <person name="Togiya S."/>
            <person name="Komai F."/>
            <person name="Hara R."/>
            <person name="Takeuchi K."/>
            <person name="Arita M."/>
            <person name="Imose N."/>
            <person name="Musashino K."/>
            <person name="Yuuki H."/>
            <person name="Oshima A."/>
            <person name="Sasaki N."/>
            <person name="Aotsuka S."/>
            <person name="Yoshikawa Y."/>
            <person name="Matsunawa H."/>
            <person name="Ichihara T."/>
            <person name="Shiohata N."/>
            <person name="Sano S."/>
            <person name="Moriya S."/>
            <person name="Momiyama H."/>
            <person name="Satoh N."/>
            <person name="Takami S."/>
            <person name="Terashima Y."/>
            <person name="Suzuki O."/>
            <person name="Nakagawa S."/>
            <person name="Senoh A."/>
            <person name="Mizoguchi H."/>
            <person name="Goto Y."/>
            <person name="Shimizu F."/>
            <person name="Wakebe H."/>
            <person name="Hishigaki H."/>
            <person name="Watanabe T."/>
            <person name="Sugiyama A."/>
            <person name="Takemoto M."/>
            <person name="Kawakami B."/>
            <person name="Yamazaki M."/>
            <person name="Watanabe K."/>
            <person name="Kumagai A."/>
            <person name="Itakura S."/>
            <person name="Fukuzumi Y."/>
            <person name="Fujimori Y."/>
            <person name="Komiyama M."/>
            <person name="Tashiro H."/>
            <person name="Tanigami A."/>
            <person name="Fujiwara T."/>
            <person name="Ono T."/>
            <person name="Yamada K."/>
            <person name="Fujii Y."/>
            <person name="Ozaki K."/>
            <person name="Hirao M."/>
            <person name="Ohmori Y."/>
            <person name="Kawabata A."/>
            <person name="Hikiji T."/>
            <person name="Kobatake N."/>
            <person name="Inagaki H."/>
            <person name="Ikema Y."/>
            <person name="Okamoto S."/>
            <person name="Okitani R."/>
            <person name="Kawakami T."/>
            <person name="Noguchi S."/>
            <person name="Itoh T."/>
            <person name="Shigeta K."/>
            <person name="Senba T."/>
            <person name="Matsumura K."/>
            <person name="Nakajima Y."/>
            <person name="Mizuno T."/>
            <person name="Morinaga M."/>
            <person name="Sasaki M."/>
            <person name="Togashi T."/>
            <person name="Oyama M."/>
            <person name="Hata H."/>
            <person name="Watanabe M."/>
            <person name="Komatsu T."/>
            <person name="Mizushima-Sugano J."/>
            <person name="Satoh T."/>
            <person name="Shirai Y."/>
            <person name="Takahashi Y."/>
            <person name="Nakagawa K."/>
            <person name="Okumura K."/>
            <person name="Nagase T."/>
            <person name="Nomura N."/>
            <person name="Kikuchi H."/>
            <person name="Masuho Y."/>
            <person name="Yamashita R."/>
            <person name="Nakai K."/>
            <person name="Yada T."/>
            <person name="Nakamura Y."/>
            <person name="Ohara O."/>
            <person name="Isogai T."/>
            <person name="Sugano S."/>
        </authorList>
    </citation>
    <scope>NUCLEOTIDE SEQUENCE [LARGE SCALE MRNA] (ISOFORMS 1 AND 2)</scope>
    <scope>VARIANTS VAL-275 AND GLY-379</scope>
    <source>
        <tissue>Testis</tissue>
    </source>
</reference>
<reference key="2">
    <citation type="journal article" date="2006" name="Nature">
        <title>Human chromosome 11 DNA sequence and analysis including novel gene identification.</title>
        <authorList>
            <person name="Taylor T.D."/>
            <person name="Noguchi H."/>
            <person name="Totoki Y."/>
            <person name="Toyoda A."/>
            <person name="Kuroki Y."/>
            <person name="Dewar K."/>
            <person name="Lloyd C."/>
            <person name="Itoh T."/>
            <person name="Takeda T."/>
            <person name="Kim D.-W."/>
            <person name="She X."/>
            <person name="Barlow K.F."/>
            <person name="Bloom T."/>
            <person name="Bruford E."/>
            <person name="Chang J.L."/>
            <person name="Cuomo C.A."/>
            <person name="Eichler E."/>
            <person name="FitzGerald M.G."/>
            <person name="Jaffe D.B."/>
            <person name="LaButti K."/>
            <person name="Nicol R."/>
            <person name="Park H.-S."/>
            <person name="Seaman C."/>
            <person name="Sougnez C."/>
            <person name="Yang X."/>
            <person name="Zimmer A.R."/>
            <person name="Zody M.C."/>
            <person name="Birren B.W."/>
            <person name="Nusbaum C."/>
            <person name="Fujiyama A."/>
            <person name="Hattori M."/>
            <person name="Rogers J."/>
            <person name="Lander E.S."/>
            <person name="Sakaki Y."/>
        </authorList>
    </citation>
    <scope>NUCLEOTIDE SEQUENCE [LARGE SCALE GENOMIC DNA]</scope>
</reference>
<reference key="3">
    <citation type="journal article" date="2004" name="Genome Res.">
        <title>The status, quality, and expansion of the NIH full-length cDNA project: the Mammalian Gene Collection (MGC).</title>
        <authorList>
            <consortium name="The MGC Project Team"/>
        </authorList>
    </citation>
    <scope>NUCLEOTIDE SEQUENCE [LARGE SCALE MRNA] (ISOFORM 1)</scope>
    <scope>VARIANTS ARG-171; HIS-274; VAL-275; GLY-379 AND GLU-455</scope>
    <source>
        <tissue>Testis</tissue>
        <tissue>Uterus</tissue>
    </source>
</reference>
<accession>Q8IYU4</accession>
<accession>Q6ZRU1</accession>
<accession>Q96EK3</accession>
<accession>Q96MB0</accession>
<sequence>MWHAISRTSRMSQSGCPSGLLADKNISSSATRVIVKTAGNQKDFMVADDISVRQFKEMLLAHFQCQMDQLVLVFMGCLLKDHDTLSQRGIMDGHTIYLVIKSKQGSRSLAHSFRDLPTNDPCHRDRNTKGNSSRVHQPTGMNQAPVELAHFVGSDAPKVHTQNLEVSHPECKAQMLENPSIQRLLSNMEFMWQFISEHLDTQQLMQQNPEVSRLLLDNSEILLQTLELARNLAMIQEIMQIQQPSQNLEYPLNPQPYLGLETMPGGNNALGQNYADINDQMLNSMQDPFGGNPFTALLAGQVLEQVQSSPPPPPPSQEQQDQLTQHPATRVIYNSSGGFSSNTSANDTLNKVNHTSKANTAMISTKGQSHICATRQPAWIPALPSIELTQQLQEEYKDATVSLSSSRQTLKGDLQLSDEQSSSQITGGMMQLLMNNPYLAAQIMLFTSMPQLSEQWRQQLPTFLQQTQISDLLSA</sequence>
<organism>
    <name type="scientific">Homo sapiens</name>
    <name type="common">Human</name>
    <dbReference type="NCBI Taxonomy" id="9606"/>
    <lineage>
        <taxon>Eukaryota</taxon>
        <taxon>Metazoa</taxon>
        <taxon>Chordata</taxon>
        <taxon>Craniata</taxon>
        <taxon>Vertebrata</taxon>
        <taxon>Euteleostomi</taxon>
        <taxon>Mammalia</taxon>
        <taxon>Eutheria</taxon>
        <taxon>Euarchontoglires</taxon>
        <taxon>Primates</taxon>
        <taxon>Haplorrhini</taxon>
        <taxon>Catarrhini</taxon>
        <taxon>Hominidae</taxon>
        <taxon>Homo</taxon>
    </lineage>
</organism>